<name>KIF5A_RAT</name>
<reference evidence="10" key="1">
    <citation type="submission" date="2004-01" db="EMBL/GenBank/DDBJ databases">
        <authorList>
            <person name="Taylor A.G."/>
            <person name="Miyashiro K."/>
            <person name="Eberwine J."/>
            <person name="Meaney D.F."/>
        </authorList>
    </citation>
    <scope>NUCLEOTIDE SEQUENCE [MRNA]</scope>
    <source>
        <strain evidence="10">Sprague-Dawley</strain>
    </source>
</reference>
<reference evidence="9" key="2">
    <citation type="journal article" date="1994" name="Neuron">
        <title>Cloning and localization of a conventional kinesin motor expressed exclusively in neurons.</title>
        <authorList>
            <person name="Niclas J."/>
            <person name="Navone F."/>
            <person name="Hom-Booher N."/>
            <person name="Vale R.D."/>
        </authorList>
    </citation>
    <scope>SUBCELLULAR LOCATION</scope>
    <scope>TISSUE SPECIFICITY</scope>
</reference>
<reference key="3">
    <citation type="journal article" date="2003" name="J. Cell Sci.">
        <title>Beta-dystrobrevin interacts directly with kinesin heavy chain in brain.</title>
        <authorList>
            <person name="Macioce P."/>
            <person name="Gambara G."/>
            <person name="Bernassola M."/>
            <person name="Gaddini L."/>
            <person name="Torreri P."/>
            <person name="Macchia G."/>
            <person name="Ramoni C."/>
            <person name="Ceccarini M."/>
            <person name="Petrucci T.C."/>
        </authorList>
    </citation>
    <scope>INTERACTION WITH DTNB</scope>
</reference>
<reference key="4">
    <citation type="journal article" date="2013" name="J. Biol. Chem.">
        <title>c-Jun NH2-terminal kinase (JNK)-interacting protein-3 (JIP3) regulates neuronal axon elongation in a kinesin- and JNK-dependent manner.</title>
        <authorList>
            <person name="Sun T."/>
            <person name="Yu N."/>
            <person name="Zhai L.K."/>
            <person name="Li N."/>
            <person name="Zhang C."/>
            <person name="Zhou L."/>
            <person name="Huang Z."/>
            <person name="Jiang X.Y."/>
            <person name="Shen Y."/>
            <person name="Chen Z.Y."/>
        </authorList>
    </citation>
    <scope>FUNCTION</scope>
</reference>
<reference key="5">
    <citation type="journal article" date="1997" name="Biochemistry">
        <title>X-ray structure of motor and neck domains from rat brain kinesin.</title>
        <authorList>
            <person name="Sack S."/>
            <person name="Mueller J."/>
            <person name="Marx A."/>
            <person name="Thormaehlen M."/>
            <person name="Mandelkow E.M."/>
            <person name="Brady S.T."/>
            <person name="Mandelkow E."/>
        </authorList>
    </citation>
    <scope>X-RAY CRYSTALLOGRAPHY (2.0 ANGSTROMS) OF 252-351 IN COMPLEX WITH ADP</scope>
</reference>
<accession>Q6QLM7</accession>
<comment type="function">
    <text evidence="1 7">Microtubule-dependent motor required for slow axonal transport of neurofilament proteins (NFH, NFM and NFL). Can induce formation of neurite-like membrane protrusions in non-neuronal cells in a ZFYVE27-dependent manner. The ZFYVE27-KIF5A complex contributes to the vesicular transport of VAPA, VAPB, SURF4, RAB11A, RAB11B and RTN3 proteins in neurons (By similarity). Required for anterograde axonal transportation of MAPK8IP3/JIP3 which is essential for MAPK8IP3/JIP3 function in axon elongation (PubMed:23576431).</text>
</comment>
<comment type="catalytic activity">
    <reaction evidence="2">
        <text>ATP + H2O + a kinesin associated with a microtubule at position (n) = ADP + phosphate a kinesin associated with a microtubule at position (n+1, toward the plus end).</text>
        <dbReference type="EC" id="5.6.1.3"/>
    </reaction>
</comment>
<comment type="subunit">
    <text evidence="1 2 6">Oligomer composed of two heavy chains and two light chains. Interacts with GRIP1. Interacts with FMR1 (via C-terminus); this interaction is increased in a mGluR-dependent manner. Interacts with BORCS5. Interacts with ZFYVE27. Interacts with VAPA, VAPB, SURF4, RAB11A (GDP-bound form), RAB11B (GDP-bound form) and RTN3 in a ZFYVE27-dependent manner. Interacts with BICD2. Interacts with DTNB (PubMed:14600269).</text>
</comment>
<comment type="subcellular location">
    <subcellularLocation>
        <location evidence="8">Cytoplasm</location>
        <location evidence="8">Perinuclear region</location>
    </subcellularLocation>
    <subcellularLocation>
        <location evidence="8">Cytoplasm</location>
        <location evidence="8">Cytoskeleton</location>
    </subcellularLocation>
    <subcellularLocation>
        <location evidence="8">Perikaryon</location>
    </subcellularLocation>
    <text>Concentrated in the cell body of the neurons, particularly in the perinuclear region.</text>
</comment>
<comment type="tissue specificity">
    <text evidence="8">Expressed in brain.</text>
</comment>
<comment type="domain">
    <text evidence="9">Composed of three structural domains: a large globular N-terminal domain which is responsible for the motor activity of kinesin (it hydrolyzes ATP and binds microtubule), a central alpha-helical coiled coil domain that mediates the heavy chain dimerization; and a small globular C-terminal domain which interacts with other proteins (such as the kinesin light chains), vesicles and membranous organelles.</text>
</comment>
<comment type="similarity">
    <text evidence="4">Belongs to the TRAFAC class myosin-kinesin ATPase superfamily. Kinesin family. Kinesin subfamily.</text>
</comment>
<dbReference type="EC" id="5.6.1.3" evidence="2"/>
<dbReference type="EMBL" id="AY535015">
    <property type="protein sequence ID" value="AAS45402.1"/>
    <property type="molecule type" value="mRNA"/>
</dbReference>
<dbReference type="RefSeq" id="NP_997688.1">
    <property type="nucleotide sequence ID" value="NM_212523.1"/>
</dbReference>
<dbReference type="PDB" id="2KIN">
    <property type="method" value="X-ray"/>
    <property type="resolution" value="2.00 A"/>
    <property type="chains" value="B=252-351"/>
</dbReference>
<dbReference type="PDB" id="3KIN">
    <property type="method" value="X-ray"/>
    <property type="resolution" value="3.10 A"/>
    <property type="chains" value="B/D=256-372"/>
</dbReference>
<dbReference type="PDBsum" id="2KIN"/>
<dbReference type="PDBsum" id="3KIN"/>
<dbReference type="SMR" id="Q6QLM7"/>
<dbReference type="BioGRID" id="260858">
    <property type="interactions" value="4"/>
</dbReference>
<dbReference type="CORUM" id="Q6QLM7"/>
<dbReference type="DIP" id="DIP-46364N"/>
<dbReference type="FunCoup" id="Q6QLM7">
    <property type="interactions" value="1347"/>
</dbReference>
<dbReference type="IntAct" id="Q6QLM7">
    <property type="interactions" value="7"/>
</dbReference>
<dbReference type="MINT" id="Q6QLM7"/>
<dbReference type="STRING" id="10116.ENSRNOP00000071539"/>
<dbReference type="PhosphoSitePlus" id="Q6QLM7"/>
<dbReference type="SwissPalm" id="Q6QLM7"/>
<dbReference type="jPOST" id="Q6QLM7"/>
<dbReference type="PaxDb" id="10116-ENSRNOP00000007721"/>
<dbReference type="GeneID" id="314906"/>
<dbReference type="KEGG" id="rno:314906"/>
<dbReference type="UCSC" id="RGD:1303035">
    <property type="organism name" value="rat"/>
</dbReference>
<dbReference type="AGR" id="RGD:1303035"/>
<dbReference type="CTD" id="3798"/>
<dbReference type="RGD" id="1303035">
    <property type="gene designation" value="Kif5a"/>
</dbReference>
<dbReference type="eggNOG" id="KOG0240">
    <property type="taxonomic scope" value="Eukaryota"/>
</dbReference>
<dbReference type="InParanoid" id="Q6QLM7"/>
<dbReference type="OrthoDB" id="55203at9989"/>
<dbReference type="PhylomeDB" id="Q6QLM7"/>
<dbReference type="Reactome" id="R-RNO-2132295">
    <property type="pathway name" value="MHC class II antigen presentation"/>
</dbReference>
<dbReference type="Reactome" id="R-RNO-5625970">
    <property type="pathway name" value="RHO GTPases activate KTN1"/>
</dbReference>
<dbReference type="Reactome" id="R-RNO-6811434">
    <property type="pathway name" value="COPI-dependent Golgi-to-ER retrograde traffic"/>
</dbReference>
<dbReference type="Reactome" id="R-RNO-983189">
    <property type="pathway name" value="Kinesins"/>
</dbReference>
<dbReference type="EvolutionaryTrace" id="Q6QLM7"/>
<dbReference type="PRO" id="PR:Q6QLM7"/>
<dbReference type="Proteomes" id="UP000002494">
    <property type="component" value="Unplaced"/>
</dbReference>
<dbReference type="GO" id="GO:0097440">
    <property type="term" value="C:apical dendrite"/>
    <property type="evidence" value="ECO:0000314"/>
    <property type="project" value="RGD"/>
</dbReference>
<dbReference type="GO" id="GO:0030424">
    <property type="term" value="C:axon"/>
    <property type="evidence" value="ECO:0000314"/>
    <property type="project" value="RGD"/>
</dbReference>
<dbReference type="GO" id="GO:1904115">
    <property type="term" value="C:axon cytoplasm"/>
    <property type="evidence" value="ECO:0007669"/>
    <property type="project" value="GOC"/>
</dbReference>
<dbReference type="GO" id="GO:0090724">
    <property type="term" value="C:central region of growth cone"/>
    <property type="evidence" value="ECO:0000314"/>
    <property type="project" value="RGD"/>
</dbReference>
<dbReference type="GO" id="GO:0035253">
    <property type="term" value="C:ciliary rootlet"/>
    <property type="evidence" value="ECO:0000266"/>
    <property type="project" value="RGD"/>
</dbReference>
<dbReference type="GO" id="GO:0005737">
    <property type="term" value="C:cytoplasm"/>
    <property type="evidence" value="ECO:0000266"/>
    <property type="project" value="RGD"/>
</dbReference>
<dbReference type="GO" id="GO:0030425">
    <property type="term" value="C:dendrite"/>
    <property type="evidence" value="ECO:0000314"/>
    <property type="project" value="RGD"/>
</dbReference>
<dbReference type="GO" id="GO:0032839">
    <property type="term" value="C:dendrite cytoplasm"/>
    <property type="evidence" value="ECO:0007669"/>
    <property type="project" value="GOC"/>
</dbReference>
<dbReference type="GO" id="GO:0005871">
    <property type="term" value="C:kinesin complex"/>
    <property type="evidence" value="ECO:0000314"/>
    <property type="project" value="RGD"/>
</dbReference>
<dbReference type="GO" id="GO:0005874">
    <property type="term" value="C:microtubule"/>
    <property type="evidence" value="ECO:0000314"/>
    <property type="project" value="RGD"/>
</dbReference>
<dbReference type="GO" id="GO:0043005">
    <property type="term" value="C:neuron projection"/>
    <property type="evidence" value="ECO:0000266"/>
    <property type="project" value="RGD"/>
</dbReference>
<dbReference type="GO" id="GO:0043025">
    <property type="term" value="C:neuronal cell body"/>
    <property type="evidence" value="ECO:0000266"/>
    <property type="project" value="RGD"/>
</dbReference>
<dbReference type="GO" id="GO:0000932">
    <property type="term" value="C:P-body"/>
    <property type="evidence" value="ECO:0000314"/>
    <property type="project" value="RGD"/>
</dbReference>
<dbReference type="GO" id="GO:0043204">
    <property type="term" value="C:perikaryon"/>
    <property type="evidence" value="ECO:0000314"/>
    <property type="project" value="RGD"/>
</dbReference>
<dbReference type="GO" id="GO:0048471">
    <property type="term" value="C:perinuclear region of cytoplasm"/>
    <property type="evidence" value="ECO:0007669"/>
    <property type="project" value="UniProtKB-SubCell"/>
</dbReference>
<dbReference type="GO" id="GO:0099524">
    <property type="term" value="C:postsynaptic cytosol"/>
    <property type="evidence" value="ECO:0000266"/>
    <property type="project" value="RGD"/>
</dbReference>
<dbReference type="GO" id="GO:0005524">
    <property type="term" value="F:ATP binding"/>
    <property type="evidence" value="ECO:0007669"/>
    <property type="project" value="UniProtKB-KW"/>
</dbReference>
<dbReference type="GO" id="GO:0016887">
    <property type="term" value="F:ATP hydrolysis activity"/>
    <property type="evidence" value="ECO:0000318"/>
    <property type="project" value="GO_Central"/>
</dbReference>
<dbReference type="GO" id="GO:0019894">
    <property type="term" value="F:kinesin binding"/>
    <property type="evidence" value="ECO:0000266"/>
    <property type="project" value="RGD"/>
</dbReference>
<dbReference type="GO" id="GO:0008017">
    <property type="term" value="F:microtubule binding"/>
    <property type="evidence" value="ECO:0000266"/>
    <property type="project" value="RGD"/>
</dbReference>
<dbReference type="GO" id="GO:0003777">
    <property type="term" value="F:microtubule motor activity"/>
    <property type="evidence" value="ECO:0000250"/>
    <property type="project" value="UniProtKB"/>
</dbReference>
<dbReference type="GO" id="GO:0008574">
    <property type="term" value="F:plus-end-directed microtubule motor activity"/>
    <property type="evidence" value="ECO:0000318"/>
    <property type="project" value="GO_Central"/>
</dbReference>
<dbReference type="GO" id="GO:0044877">
    <property type="term" value="F:protein-containing complex binding"/>
    <property type="evidence" value="ECO:0000353"/>
    <property type="project" value="RGD"/>
</dbReference>
<dbReference type="GO" id="GO:0097110">
    <property type="term" value="F:scaffold protein binding"/>
    <property type="evidence" value="ECO:0000314"/>
    <property type="project" value="RGD"/>
</dbReference>
<dbReference type="GO" id="GO:0099641">
    <property type="term" value="P:anterograde axonal protein transport"/>
    <property type="evidence" value="ECO:0000315"/>
    <property type="project" value="UniProtKB"/>
</dbReference>
<dbReference type="GO" id="GO:0098971">
    <property type="term" value="P:anterograde dendritic transport of neurotransmitter receptor complex"/>
    <property type="evidence" value="ECO:0000266"/>
    <property type="project" value="RGD"/>
</dbReference>
<dbReference type="GO" id="GO:0007411">
    <property type="term" value="P:axon guidance"/>
    <property type="evidence" value="ECO:0000318"/>
    <property type="project" value="GO_Central"/>
</dbReference>
<dbReference type="GO" id="GO:0071361">
    <property type="term" value="P:cellular response to ethanol"/>
    <property type="evidence" value="ECO:0000270"/>
    <property type="project" value="RGD"/>
</dbReference>
<dbReference type="GO" id="GO:1990090">
    <property type="term" value="P:cellular response to nerve growth factor stimulus"/>
    <property type="evidence" value="ECO:0000270"/>
    <property type="project" value="RGD"/>
</dbReference>
<dbReference type="GO" id="GO:0021987">
    <property type="term" value="P:cerebral cortex development"/>
    <property type="evidence" value="ECO:0000270"/>
    <property type="project" value="RGD"/>
</dbReference>
<dbReference type="GO" id="GO:0021766">
    <property type="term" value="P:hippocampus development"/>
    <property type="evidence" value="ECO:0000270"/>
    <property type="project" value="RGD"/>
</dbReference>
<dbReference type="GO" id="GO:0007017">
    <property type="term" value="P:microtubule-based process"/>
    <property type="evidence" value="ECO:0000304"/>
    <property type="project" value="RGD"/>
</dbReference>
<dbReference type="GO" id="GO:0048666">
    <property type="term" value="P:neuron development"/>
    <property type="evidence" value="ECO:0000270"/>
    <property type="project" value="RGD"/>
</dbReference>
<dbReference type="GO" id="GO:1904647">
    <property type="term" value="P:response to rotenone"/>
    <property type="evidence" value="ECO:0000270"/>
    <property type="project" value="RGD"/>
</dbReference>
<dbReference type="GO" id="GO:1990049">
    <property type="term" value="P:retrograde neuronal dense core vesicle transport"/>
    <property type="evidence" value="ECO:0000316"/>
    <property type="project" value="ARUK-UCL"/>
</dbReference>
<dbReference type="GO" id="GO:0048489">
    <property type="term" value="P:synaptic vesicle transport"/>
    <property type="evidence" value="ECO:0000318"/>
    <property type="project" value="GO_Central"/>
</dbReference>
<dbReference type="GO" id="GO:0021794">
    <property type="term" value="P:thalamus development"/>
    <property type="evidence" value="ECO:0000270"/>
    <property type="project" value="RGD"/>
</dbReference>
<dbReference type="GO" id="GO:0016192">
    <property type="term" value="P:vesicle-mediated transport"/>
    <property type="evidence" value="ECO:0000250"/>
    <property type="project" value="UniProtKB"/>
</dbReference>
<dbReference type="CDD" id="cd23649">
    <property type="entry name" value="Khc_CBD_cc"/>
    <property type="match status" value="1"/>
</dbReference>
<dbReference type="CDD" id="cd01369">
    <property type="entry name" value="KISc_KHC_KIF5"/>
    <property type="match status" value="1"/>
</dbReference>
<dbReference type="FunFam" id="3.40.850.10:FF:000009">
    <property type="entry name" value="Kinesin-like protein"/>
    <property type="match status" value="1"/>
</dbReference>
<dbReference type="Gene3D" id="6.10.250.1590">
    <property type="match status" value="1"/>
</dbReference>
<dbReference type="Gene3D" id="3.40.850.10">
    <property type="entry name" value="Kinesin motor domain"/>
    <property type="match status" value="1"/>
</dbReference>
<dbReference type="InterPro" id="IPR027640">
    <property type="entry name" value="Kinesin-like_fam"/>
</dbReference>
<dbReference type="InterPro" id="IPR001752">
    <property type="entry name" value="Kinesin_motor_dom"/>
</dbReference>
<dbReference type="InterPro" id="IPR036961">
    <property type="entry name" value="Kinesin_motor_dom_sf"/>
</dbReference>
<dbReference type="InterPro" id="IPR027417">
    <property type="entry name" value="P-loop_NTPase"/>
</dbReference>
<dbReference type="PANTHER" id="PTHR47968">
    <property type="entry name" value="CENTROMERE PROTEIN E"/>
    <property type="match status" value="1"/>
</dbReference>
<dbReference type="PANTHER" id="PTHR47968:SF62">
    <property type="entry name" value="KINESIN FAMILY MEMBER 5A"/>
    <property type="match status" value="1"/>
</dbReference>
<dbReference type="Pfam" id="PF00225">
    <property type="entry name" value="Kinesin"/>
    <property type="match status" value="1"/>
</dbReference>
<dbReference type="PRINTS" id="PR00380">
    <property type="entry name" value="KINESINHEAVY"/>
</dbReference>
<dbReference type="SMART" id="SM00129">
    <property type="entry name" value="KISc"/>
    <property type="match status" value="1"/>
</dbReference>
<dbReference type="SUPFAM" id="SSF52540">
    <property type="entry name" value="P-loop containing nucleoside triphosphate hydrolases"/>
    <property type="match status" value="1"/>
</dbReference>
<dbReference type="PROSITE" id="PS50067">
    <property type="entry name" value="KINESIN_MOTOR_2"/>
    <property type="match status" value="1"/>
</dbReference>
<evidence type="ECO:0000250" key="1">
    <source>
        <dbReference type="UniProtKB" id="P33175"/>
    </source>
</evidence>
<evidence type="ECO:0000250" key="2">
    <source>
        <dbReference type="UniProtKB" id="Q12840"/>
    </source>
</evidence>
<evidence type="ECO:0000255" key="3"/>
<evidence type="ECO:0000255" key="4">
    <source>
        <dbReference type="PROSITE-ProRule" id="PRU00283"/>
    </source>
</evidence>
<evidence type="ECO:0000256" key="5">
    <source>
        <dbReference type="SAM" id="MobiDB-lite"/>
    </source>
</evidence>
<evidence type="ECO:0000269" key="6">
    <source>
    </source>
</evidence>
<evidence type="ECO:0000269" key="7">
    <source>
    </source>
</evidence>
<evidence type="ECO:0000269" key="8">
    <source>
    </source>
</evidence>
<evidence type="ECO:0000305" key="9"/>
<evidence type="ECO:0000312" key="10">
    <source>
        <dbReference type="EMBL" id="AAS45402.1"/>
    </source>
</evidence>
<evidence type="ECO:0000312" key="11">
    <source>
        <dbReference type="RGD" id="1303035"/>
    </source>
</evidence>
<evidence type="ECO:0007829" key="12">
    <source>
        <dbReference type="PDB" id="2KIN"/>
    </source>
</evidence>
<feature type="initiator methionine" description="Removed" evidence="2">
    <location>
        <position position="1"/>
    </location>
</feature>
<feature type="chain" id="PRO_0000251143" description="Kinesin heavy chain isoform 5A">
    <location>
        <begin position="2"/>
        <end position="1027"/>
    </location>
</feature>
<feature type="domain" description="Kinesin motor" evidence="4">
    <location>
        <begin position="9"/>
        <end position="327"/>
    </location>
</feature>
<feature type="region of interest" description="Microtubule-binding" evidence="3">
    <location>
        <begin position="174"/>
        <end position="315"/>
    </location>
</feature>
<feature type="region of interest" description="Necessary for interaction with ZFYVE27" evidence="1">
    <location>
        <begin position="271"/>
        <end position="361"/>
    </location>
</feature>
<feature type="region of interest" description="Interaction with BICD2" evidence="2">
    <location>
        <begin position="353"/>
        <end position="1027"/>
    </location>
</feature>
<feature type="region of interest" description="Disordered" evidence="5">
    <location>
        <begin position="906"/>
        <end position="936"/>
    </location>
</feature>
<feature type="region of interest" description="Globular" evidence="3">
    <location>
        <begin position="907"/>
        <end position="1027"/>
    </location>
</feature>
<feature type="coiled-coil region" evidence="3">
    <location>
        <begin position="331"/>
        <end position="905"/>
    </location>
</feature>
<feature type="binding site">
    <location>
        <begin position="86"/>
        <end position="93"/>
    </location>
    <ligand>
        <name>ATP</name>
        <dbReference type="ChEBI" id="CHEBI:30616"/>
    </ligand>
</feature>
<feature type="modified residue" description="N-acetylalanine" evidence="2">
    <location>
        <position position="2"/>
    </location>
</feature>
<feature type="modified residue" description="Phosphothreonine" evidence="1">
    <location>
        <position position="397"/>
    </location>
</feature>
<feature type="strand" evidence="12">
    <location>
        <begin position="254"/>
        <end position="256"/>
    </location>
</feature>
<feature type="helix" evidence="12">
    <location>
        <begin position="257"/>
        <end position="271"/>
    </location>
</feature>
<feature type="helix" evidence="12">
    <location>
        <begin position="279"/>
        <end position="281"/>
    </location>
</feature>
<feature type="helix" evidence="12">
    <location>
        <begin position="283"/>
        <end position="287"/>
    </location>
</feature>
<feature type="helix" evidence="12">
    <location>
        <begin position="289"/>
        <end position="293"/>
    </location>
</feature>
<feature type="strand" evidence="12">
    <location>
        <begin position="294"/>
        <end position="304"/>
    </location>
</feature>
<feature type="helix" evidence="12">
    <location>
        <begin position="308"/>
        <end position="310"/>
    </location>
</feature>
<feature type="helix" evidence="12">
    <location>
        <begin position="311"/>
        <end position="325"/>
    </location>
</feature>
<feature type="strand" evidence="12">
    <location>
        <begin position="328"/>
        <end position="331"/>
    </location>
</feature>
<feature type="strand" evidence="12">
    <location>
        <begin position="334"/>
        <end position="336"/>
    </location>
</feature>
<feature type="helix" evidence="12">
    <location>
        <begin position="339"/>
        <end position="350"/>
    </location>
</feature>
<proteinExistence type="evidence at protein level"/>
<organism>
    <name type="scientific">Rattus norvegicus</name>
    <name type="common">Rat</name>
    <dbReference type="NCBI Taxonomy" id="10116"/>
    <lineage>
        <taxon>Eukaryota</taxon>
        <taxon>Metazoa</taxon>
        <taxon>Chordata</taxon>
        <taxon>Craniata</taxon>
        <taxon>Vertebrata</taxon>
        <taxon>Euteleostomi</taxon>
        <taxon>Mammalia</taxon>
        <taxon>Eutheria</taxon>
        <taxon>Euarchontoglires</taxon>
        <taxon>Glires</taxon>
        <taxon>Rodentia</taxon>
        <taxon>Myomorpha</taxon>
        <taxon>Muroidea</taxon>
        <taxon>Muridae</taxon>
        <taxon>Murinae</taxon>
        <taxon>Rattus</taxon>
    </lineage>
</organism>
<sequence length="1027" mass="116916">MAETNNECSIKVLCRFRPLNQAEILRGDKFIPIFQGDDSVIIGGKPYVFDRVFPPNTTQEQVYHACAMQIVKDVLAGYNGTIFAYGQTSSGKTHTMEGKLHDPQLMGIIPRIARDIFNHIYSMDENLEFHIKVSYFEIYLDKIRDLLDVTKTNLSVHEDKNRVPFVRGCTERFVSSPEEILDVIDEGKSNRHVAVTNMNEHSSRSHSIFLINIKQENIETEQKLSGKLYLADLAGSEKVSKTGAEGAVLDEAKNINKSLSALGNVISALAEGTKSYVPYRDSKMTRILQDSLGGNCRTTMFICCSPSSYNDAETKSTLMFGQRAKTIKNTASVNLELTAEQWKKKYEKEKEKTKAQKETIAKLEAELSRWRNGENVPETERLAGEDSALAAEICEETPVNDNSSIVVRIAPEERQKYEEEIRRLYKQLDDKDDEINQQSQLIEKLKQQMLDQEELLVSTRGDNEKVQRELSHLQSENDAAKEEVKEVLQALEELAVNYDQKSQEVEEKSQQNQLLVDELSQKVATMLSLESEPQRLQEVSGHQRKRIAEVLNGLMKDLSEFSVIVGNGEIKLPVEISGAIEEEFTVARLYISKIKSEVKSVVKRCRQLENLQVECHRKMEVTGRELSSCQLLISQHEAKIRSLTEYMQTVELKKRHLEESYDSLSDELAKLQAQETVHEVALKDKEPDTQDAEEVKKALELQMENHREAHHRQLARLRDEINEKQKTIDELKDLDQKLQLELEKLQADYERLKNEENEKSAKLQELTFLYERHEQSKQDLKGLEETVARELQTLHNLRKLFVQDVTTRVKKSAEMEPEDSGGIHSQKQKISFLENNLEQLTEVHKQLVRDNADLRCELPKLEKRLRATAERVKALEGALKEAKEGAMKDKRRYQQEVDRIKEAVRYKSSGKRGHSAQIAKPVRPGHYPASSPTNPYGTRSPECISYTNNLFQNYQNLHLQAAPSSTSDVYFASNGATSVAPLASYQKANTDNGNATDINDNRSDLPCGYEAEDPAKLFPLHQETAAS</sequence>
<protein>
    <recommendedName>
        <fullName>Kinesin heavy chain isoform 5A</fullName>
        <ecNumber evidence="2">5.6.1.3</ecNumber>
    </recommendedName>
    <alternativeName>
        <fullName>Kinesin heavy chain neuron-specific 1</fullName>
    </alternativeName>
    <alternativeName>
        <fullName>Neuronal kinesin heavy chain</fullName>
        <shortName>NKHC</shortName>
    </alternativeName>
</protein>
<gene>
    <name evidence="11" type="primary">Kif5a</name>
</gene>
<keyword id="KW-0002">3D-structure</keyword>
<keyword id="KW-0007">Acetylation</keyword>
<keyword id="KW-0067">ATP-binding</keyword>
<keyword id="KW-0175">Coiled coil</keyword>
<keyword id="KW-0963">Cytoplasm</keyword>
<keyword id="KW-0206">Cytoskeleton</keyword>
<keyword id="KW-0378">Hydrolase</keyword>
<keyword id="KW-0413">Isomerase</keyword>
<keyword id="KW-0493">Microtubule</keyword>
<keyword id="KW-0505">Motor protein</keyword>
<keyword id="KW-0547">Nucleotide-binding</keyword>
<keyword id="KW-0597">Phosphoprotein</keyword>
<keyword id="KW-1185">Reference proteome</keyword>